<organism>
    <name type="scientific">Cupriavidus pinatubonensis (strain JMP 134 / LMG 1197)</name>
    <name type="common">Cupriavidus necator (strain JMP 134)</name>
    <dbReference type="NCBI Taxonomy" id="264198"/>
    <lineage>
        <taxon>Bacteria</taxon>
        <taxon>Pseudomonadati</taxon>
        <taxon>Pseudomonadota</taxon>
        <taxon>Betaproteobacteria</taxon>
        <taxon>Burkholderiales</taxon>
        <taxon>Burkholderiaceae</taxon>
        <taxon>Cupriavidus</taxon>
    </lineage>
</organism>
<sequence>MTRSAKKGPFCDAHLLKKVEAAVGGKDKKPIKTWSRRSTIMPEFIGLTIAVHNGRQHVPVYVTENMVGHKLGEFALTRTFKGHAADKKAKR</sequence>
<evidence type="ECO:0000255" key="1">
    <source>
        <dbReference type="HAMAP-Rule" id="MF_00531"/>
    </source>
</evidence>
<evidence type="ECO:0000305" key="2"/>
<feature type="chain" id="PRO_0000265408" description="Small ribosomal subunit protein uS19">
    <location>
        <begin position="1"/>
        <end position="91"/>
    </location>
</feature>
<reference key="1">
    <citation type="journal article" date="2010" name="PLoS ONE">
        <title>The complete multipartite genome sequence of Cupriavidus necator JMP134, a versatile pollutant degrader.</title>
        <authorList>
            <person name="Lykidis A."/>
            <person name="Perez-Pantoja D."/>
            <person name="Ledger T."/>
            <person name="Mavromatis K."/>
            <person name="Anderson I.J."/>
            <person name="Ivanova N.N."/>
            <person name="Hooper S.D."/>
            <person name="Lapidus A."/>
            <person name="Lucas S."/>
            <person name="Gonzalez B."/>
            <person name="Kyrpides N.C."/>
        </authorList>
    </citation>
    <scope>NUCLEOTIDE SEQUENCE [LARGE SCALE GENOMIC DNA]</scope>
    <source>
        <strain>JMP134 / LMG 1197</strain>
    </source>
</reference>
<comment type="function">
    <text evidence="1">Protein S19 forms a complex with S13 that binds strongly to the 16S ribosomal RNA.</text>
</comment>
<comment type="similarity">
    <text evidence="1">Belongs to the universal ribosomal protein uS19 family.</text>
</comment>
<keyword id="KW-0687">Ribonucleoprotein</keyword>
<keyword id="KW-0689">Ribosomal protein</keyword>
<keyword id="KW-0694">RNA-binding</keyword>
<keyword id="KW-0699">rRNA-binding</keyword>
<protein>
    <recommendedName>
        <fullName evidence="1">Small ribosomal subunit protein uS19</fullName>
    </recommendedName>
    <alternativeName>
        <fullName evidence="2">30S ribosomal protein S19</fullName>
    </alternativeName>
</protein>
<gene>
    <name evidence="1" type="primary">rpsS</name>
    <name type="ordered locus">Reut_A3175</name>
</gene>
<accession>Q46WE8</accession>
<proteinExistence type="inferred from homology"/>
<name>RS19_CUPPJ</name>
<dbReference type="EMBL" id="CP000090">
    <property type="protein sequence ID" value="AAZ62535.1"/>
    <property type="molecule type" value="Genomic_DNA"/>
</dbReference>
<dbReference type="SMR" id="Q46WE8"/>
<dbReference type="STRING" id="264198.Reut_A3175"/>
<dbReference type="KEGG" id="reu:Reut_A3175"/>
<dbReference type="eggNOG" id="COG0185">
    <property type="taxonomic scope" value="Bacteria"/>
</dbReference>
<dbReference type="HOGENOM" id="CLU_144911_0_1_4"/>
<dbReference type="OrthoDB" id="9797833at2"/>
<dbReference type="GO" id="GO:0005737">
    <property type="term" value="C:cytoplasm"/>
    <property type="evidence" value="ECO:0007669"/>
    <property type="project" value="UniProtKB-ARBA"/>
</dbReference>
<dbReference type="GO" id="GO:0015935">
    <property type="term" value="C:small ribosomal subunit"/>
    <property type="evidence" value="ECO:0007669"/>
    <property type="project" value="InterPro"/>
</dbReference>
<dbReference type="GO" id="GO:0019843">
    <property type="term" value="F:rRNA binding"/>
    <property type="evidence" value="ECO:0007669"/>
    <property type="project" value="UniProtKB-UniRule"/>
</dbReference>
<dbReference type="GO" id="GO:0003735">
    <property type="term" value="F:structural constituent of ribosome"/>
    <property type="evidence" value="ECO:0007669"/>
    <property type="project" value="InterPro"/>
</dbReference>
<dbReference type="GO" id="GO:0000028">
    <property type="term" value="P:ribosomal small subunit assembly"/>
    <property type="evidence" value="ECO:0007669"/>
    <property type="project" value="TreeGrafter"/>
</dbReference>
<dbReference type="GO" id="GO:0006412">
    <property type="term" value="P:translation"/>
    <property type="evidence" value="ECO:0007669"/>
    <property type="project" value="UniProtKB-UniRule"/>
</dbReference>
<dbReference type="FunFam" id="3.30.860.10:FF:000001">
    <property type="entry name" value="30S ribosomal protein S19"/>
    <property type="match status" value="1"/>
</dbReference>
<dbReference type="Gene3D" id="3.30.860.10">
    <property type="entry name" value="30s Ribosomal Protein S19, Chain A"/>
    <property type="match status" value="1"/>
</dbReference>
<dbReference type="HAMAP" id="MF_00531">
    <property type="entry name" value="Ribosomal_uS19"/>
    <property type="match status" value="1"/>
</dbReference>
<dbReference type="InterPro" id="IPR002222">
    <property type="entry name" value="Ribosomal_uS19"/>
</dbReference>
<dbReference type="InterPro" id="IPR005732">
    <property type="entry name" value="Ribosomal_uS19_bac-type"/>
</dbReference>
<dbReference type="InterPro" id="IPR020934">
    <property type="entry name" value="Ribosomal_uS19_CS"/>
</dbReference>
<dbReference type="InterPro" id="IPR023575">
    <property type="entry name" value="Ribosomal_uS19_SF"/>
</dbReference>
<dbReference type="NCBIfam" id="TIGR01050">
    <property type="entry name" value="rpsS_bact"/>
    <property type="match status" value="1"/>
</dbReference>
<dbReference type="PANTHER" id="PTHR11880">
    <property type="entry name" value="RIBOSOMAL PROTEIN S19P FAMILY MEMBER"/>
    <property type="match status" value="1"/>
</dbReference>
<dbReference type="PANTHER" id="PTHR11880:SF8">
    <property type="entry name" value="SMALL RIBOSOMAL SUBUNIT PROTEIN US19M"/>
    <property type="match status" value="1"/>
</dbReference>
<dbReference type="Pfam" id="PF00203">
    <property type="entry name" value="Ribosomal_S19"/>
    <property type="match status" value="1"/>
</dbReference>
<dbReference type="PIRSF" id="PIRSF002144">
    <property type="entry name" value="Ribosomal_S19"/>
    <property type="match status" value="1"/>
</dbReference>
<dbReference type="PRINTS" id="PR00975">
    <property type="entry name" value="RIBOSOMALS19"/>
</dbReference>
<dbReference type="SUPFAM" id="SSF54570">
    <property type="entry name" value="Ribosomal protein S19"/>
    <property type="match status" value="1"/>
</dbReference>
<dbReference type="PROSITE" id="PS00323">
    <property type="entry name" value="RIBOSOMAL_S19"/>
    <property type="match status" value="1"/>
</dbReference>